<dbReference type="EC" id="2.8.1.10" evidence="1"/>
<dbReference type="EMBL" id="CP001147">
    <property type="protein sequence ID" value="ACI20588.1"/>
    <property type="molecule type" value="Genomic_DNA"/>
</dbReference>
<dbReference type="RefSeq" id="WP_012545324.1">
    <property type="nucleotide sequence ID" value="NC_011296.1"/>
</dbReference>
<dbReference type="RefSeq" id="YP_002248288.1">
    <property type="nucleotide sequence ID" value="NC_011296.1"/>
</dbReference>
<dbReference type="SMR" id="B5YJ73"/>
<dbReference type="FunCoup" id="B5YJ73">
    <property type="interactions" value="312"/>
</dbReference>
<dbReference type="STRING" id="289376.THEYE_A0443"/>
<dbReference type="EnsemblBacteria" id="ACI20588">
    <property type="protein sequence ID" value="ACI20588"/>
    <property type="gene ID" value="THEYE_A0443"/>
</dbReference>
<dbReference type="KEGG" id="tye:THEYE_A0443"/>
<dbReference type="PATRIC" id="fig|289376.4.peg.438"/>
<dbReference type="eggNOG" id="COG2022">
    <property type="taxonomic scope" value="Bacteria"/>
</dbReference>
<dbReference type="HOGENOM" id="CLU_062233_1_0_0"/>
<dbReference type="InParanoid" id="B5YJ73"/>
<dbReference type="OrthoDB" id="9805935at2"/>
<dbReference type="UniPathway" id="UPA00060"/>
<dbReference type="Proteomes" id="UP000000718">
    <property type="component" value="Chromosome"/>
</dbReference>
<dbReference type="GO" id="GO:1902508">
    <property type="term" value="C:2-iminoacetate synthase complex"/>
    <property type="evidence" value="ECO:0000318"/>
    <property type="project" value="GO_Central"/>
</dbReference>
<dbReference type="GO" id="GO:0005737">
    <property type="term" value="C:cytoplasm"/>
    <property type="evidence" value="ECO:0007669"/>
    <property type="project" value="UniProtKB-SubCell"/>
</dbReference>
<dbReference type="GO" id="GO:1990107">
    <property type="term" value="F:thiazole synthase activity"/>
    <property type="evidence" value="ECO:0007669"/>
    <property type="project" value="UniProtKB-EC"/>
</dbReference>
<dbReference type="GO" id="GO:0009228">
    <property type="term" value="P:thiamine biosynthetic process"/>
    <property type="evidence" value="ECO:0000318"/>
    <property type="project" value="GO_Central"/>
</dbReference>
<dbReference type="GO" id="GO:0009229">
    <property type="term" value="P:thiamine diphosphate biosynthetic process"/>
    <property type="evidence" value="ECO:0000318"/>
    <property type="project" value="GO_Central"/>
</dbReference>
<dbReference type="CDD" id="cd04728">
    <property type="entry name" value="ThiG"/>
    <property type="match status" value="1"/>
</dbReference>
<dbReference type="Gene3D" id="3.20.20.70">
    <property type="entry name" value="Aldolase class I"/>
    <property type="match status" value="1"/>
</dbReference>
<dbReference type="HAMAP" id="MF_00443">
    <property type="entry name" value="ThiG"/>
    <property type="match status" value="1"/>
</dbReference>
<dbReference type="InterPro" id="IPR013785">
    <property type="entry name" value="Aldolase_TIM"/>
</dbReference>
<dbReference type="InterPro" id="IPR033983">
    <property type="entry name" value="Thiazole_synthase_ThiG"/>
</dbReference>
<dbReference type="InterPro" id="IPR008867">
    <property type="entry name" value="ThiG"/>
</dbReference>
<dbReference type="PANTHER" id="PTHR34266">
    <property type="entry name" value="THIAZOLE SYNTHASE"/>
    <property type="match status" value="1"/>
</dbReference>
<dbReference type="PANTHER" id="PTHR34266:SF2">
    <property type="entry name" value="THIAZOLE SYNTHASE"/>
    <property type="match status" value="1"/>
</dbReference>
<dbReference type="Pfam" id="PF05690">
    <property type="entry name" value="ThiG"/>
    <property type="match status" value="1"/>
</dbReference>
<dbReference type="SUPFAM" id="SSF110399">
    <property type="entry name" value="ThiG-like"/>
    <property type="match status" value="1"/>
</dbReference>
<evidence type="ECO:0000255" key="1">
    <source>
        <dbReference type="HAMAP-Rule" id="MF_00443"/>
    </source>
</evidence>
<protein>
    <recommendedName>
        <fullName evidence="1">Thiazole synthase</fullName>
        <ecNumber evidence="1">2.8.1.10</ecNumber>
    </recommendedName>
</protein>
<accession>B5YJ73</accession>
<organism>
    <name type="scientific">Thermodesulfovibrio yellowstonii (strain ATCC 51303 / DSM 11347 / YP87)</name>
    <dbReference type="NCBI Taxonomy" id="289376"/>
    <lineage>
        <taxon>Bacteria</taxon>
        <taxon>Pseudomonadati</taxon>
        <taxon>Nitrospirota</taxon>
        <taxon>Thermodesulfovibrionia</taxon>
        <taxon>Thermodesulfovibrionales</taxon>
        <taxon>Thermodesulfovibrionaceae</taxon>
        <taxon>Thermodesulfovibrio</taxon>
    </lineage>
</organism>
<gene>
    <name evidence="1" type="primary">thiG</name>
    <name type="ordered locus">THEYE_A0443</name>
</gene>
<reference key="1">
    <citation type="submission" date="2008-08" db="EMBL/GenBank/DDBJ databases">
        <title>The complete genome sequence of Thermodesulfovibrio yellowstonii strain ATCC 51303 / DSM 11347 / YP87.</title>
        <authorList>
            <person name="Dodson R.J."/>
            <person name="Durkin A.S."/>
            <person name="Wu M."/>
            <person name="Eisen J."/>
            <person name="Sutton G."/>
        </authorList>
    </citation>
    <scope>NUCLEOTIDE SEQUENCE [LARGE SCALE GENOMIC DNA]</scope>
    <source>
        <strain>ATCC 51303 / DSM 11347 / YP87</strain>
    </source>
</reference>
<comment type="function">
    <text evidence="1">Catalyzes the rearrangement of 1-deoxy-D-xylulose 5-phosphate (DXP) to produce the thiazole phosphate moiety of thiamine. Sulfur is provided by the thiocarboxylate moiety of the carrier protein ThiS. In vitro, sulfur can be provided by H(2)S.</text>
</comment>
<comment type="catalytic activity">
    <reaction evidence="1">
        <text>[ThiS sulfur-carrier protein]-C-terminal-Gly-aminoethanethioate + 2-iminoacetate + 1-deoxy-D-xylulose 5-phosphate = [ThiS sulfur-carrier protein]-C-terminal Gly-Gly + 2-[(2R,5Z)-2-carboxy-4-methylthiazol-5(2H)-ylidene]ethyl phosphate + 2 H2O + H(+)</text>
        <dbReference type="Rhea" id="RHEA:26297"/>
        <dbReference type="Rhea" id="RHEA-COMP:12909"/>
        <dbReference type="Rhea" id="RHEA-COMP:19908"/>
        <dbReference type="ChEBI" id="CHEBI:15377"/>
        <dbReference type="ChEBI" id="CHEBI:15378"/>
        <dbReference type="ChEBI" id="CHEBI:57792"/>
        <dbReference type="ChEBI" id="CHEBI:62899"/>
        <dbReference type="ChEBI" id="CHEBI:77846"/>
        <dbReference type="ChEBI" id="CHEBI:90778"/>
        <dbReference type="ChEBI" id="CHEBI:232372"/>
        <dbReference type="EC" id="2.8.1.10"/>
    </reaction>
</comment>
<comment type="pathway">
    <text evidence="1">Cofactor biosynthesis; thiamine diphosphate biosynthesis.</text>
</comment>
<comment type="subunit">
    <text evidence="1">Homotetramer. Forms heterodimers with either ThiH or ThiS.</text>
</comment>
<comment type="subcellular location">
    <subcellularLocation>
        <location evidence="1">Cytoplasm</location>
    </subcellularLocation>
</comment>
<comment type="similarity">
    <text evidence="1">Belongs to the ThiG family.</text>
</comment>
<feature type="chain" id="PRO_1000196909" description="Thiazole synthase">
    <location>
        <begin position="1"/>
        <end position="257"/>
    </location>
</feature>
<feature type="active site" description="Schiff-base intermediate with DXP" evidence="1">
    <location>
        <position position="99"/>
    </location>
</feature>
<feature type="binding site" evidence="1">
    <location>
        <position position="160"/>
    </location>
    <ligand>
        <name>1-deoxy-D-xylulose 5-phosphate</name>
        <dbReference type="ChEBI" id="CHEBI:57792"/>
    </ligand>
</feature>
<feature type="binding site" evidence="1">
    <location>
        <begin position="186"/>
        <end position="187"/>
    </location>
    <ligand>
        <name>1-deoxy-D-xylulose 5-phosphate</name>
        <dbReference type="ChEBI" id="CHEBI:57792"/>
    </ligand>
</feature>
<feature type="binding site" evidence="1">
    <location>
        <begin position="208"/>
        <end position="209"/>
    </location>
    <ligand>
        <name>1-deoxy-D-xylulose 5-phosphate</name>
        <dbReference type="ChEBI" id="CHEBI:57792"/>
    </ligand>
</feature>
<name>THIG_THEYD</name>
<sequence length="257" mass="27532">MNDSLVIRGIEFKSRLWVGTGKYKSFEETARAIEASGTDVVTVAVRRVNIIDRSKENLLDYIDPKKYKILPNTAGCYTVEDALRYARLAREAGVSDMVKLEVIGDEKTLFPDVCGLLKATEILAKEGFIVFPYTNDDPITAKRLVDAGAAAVMPLGAPIGSGLGIRNPYNIKIILETVNIPVIVDAGVGTASDVSIAMELGCDAVLVNTAIAGAKDPIMMAEALKHACIAGRLAYRAGRIPKKLYASASSPIEGMLT</sequence>
<keyword id="KW-0963">Cytoplasm</keyword>
<keyword id="KW-1185">Reference proteome</keyword>
<keyword id="KW-0704">Schiff base</keyword>
<keyword id="KW-0784">Thiamine biosynthesis</keyword>
<keyword id="KW-0808">Transferase</keyword>
<proteinExistence type="inferred from homology"/>